<organism>
    <name type="scientific">Homo sapiens</name>
    <name type="common">Human</name>
    <dbReference type="NCBI Taxonomy" id="9606"/>
    <lineage>
        <taxon>Eukaryota</taxon>
        <taxon>Metazoa</taxon>
        <taxon>Chordata</taxon>
        <taxon>Craniata</taxon>
        <taxon>Vertebrata</taxon>
        <taxon>Euteleostomi</taxon>
        <taxon>Mammalia</taxon>
        <taxon>Eutheria</taxon>
        <taxon>Euarchontoglires</taxon>
        <taxon>Primates</taxon>
        <taxon>Haplorrhini</taxon>
        <taxon>Catarrhini</taxon>
        <taxon>Hominidae</taxon>
        <taxon>Homo</taxon>
    </lineage>
</organism>
<reference key="1">
    <citation type="journal article" date="2004" name="Nat. Genet.">
        <title>Complete sequencing and characterization of 21,243 full-length human cDNAs.</title>
        <authorList>
            <person name="Ota T."/>
            <person name="Suzuki Y."/>
            <person name="Nishikawa T."/>
            <person name="Otsuki T."/>
            <person name="Sugiyama T."/>
            <person name="Irie R."/>
            <person name="Wakamatsu A."/>
            <person name="Hayashi K."/>
            <person name="Sato H."/>
            <person name="Nagai K."/>
            <person name="Kimura K."/>
            <person name="Makita H."/>
            <person name="Sekine M."/>
            <person name="Obayashi M."/>
            <person name="Nishi T."/>
            <person name="Shibahara T."/>
            <person name="Tanaka T."/>
            <person name="Ishii S."/>
            <person name="Yamamoto J."/>
            <person name="Saito K."/>
            <person name="Kawai Y."/>
            <person name="Isono Y."/>
            <person name="Nakamura Y."/>
            <person name="Nagahari K."/>
            <person name="Murakami K."/>
            <person name="Yasuda T."/>
            <person name="Iwayanagi T."/>
            <person name="Wagatsuma M."/>
            <person name="Shiratori A."/>
            <person name="Sudo H."/>
            <person name="Hosoiri T."/>
            <person name="Kaku Y."/>
            <person name="Kodaira H."/>
            <person name="Kondo H."/>
            <person name="Sugawara M."/>
            <person name="Takahashi M."/>
            <person name="Kanda K."/>
            <person name="Yokoi T."/>
            <person name="Furuya T."/>
            <person name="Kikkawa E."/>
            <person name="Omura Y."/>
            <person name="Abe K."/>
            <person name="Kamihara K."/>
            <person name="Katsuta N."/>
            <person name="Sato K."/>
            <person name="Tanikawa M."/>
            <person name="Yamazaki M."/>
            <person name="Ninomiya K."/>
            <person name="Ishibashi T."/>
            <person name="Yamashita H."/>
            <person name="Murakawa K."/>
            <person name="Fujimori K."/>
            <person name="Tanai H."/>
            <person name="Kimata M."/>
            <person name="Watanabe M."/>
            <person name="Hiraoka S."/>
            <person name="Chiba Y."/>
            <person name="Ishida S."/>
            <person name="Ono Y."/>
            <person name="Takiguchi S."/>
            <person name="Watanabe S."/>
            <person name="Yosida M."/>
            <person name="Hotuta T."/>
            <person name="Kusano J."/>
            <person name="Kanehori K."/>
            <person name="Takahashi-Fujii A."/>
            <person name="Hara H."/>
            <person name="Tanase T.-O."/>
            <person name="Nomura Y."/>
            <person name="Togiya S."/>
            <person name="Komai F."/>
            <person name="Hara R."/>
            <person name="Takeuchi K."/>
            <person name="Arita M."/>
            <person name="Imose N."/>
            <person name="Musashino K."/>
            <person name="Yuuki H."/>
            <person name="Oshima A."/>
            <person name="Sasaki N."/>
            <person name="Aotsuka S."/>
            <person name="Yoshikawa Y."/>
            <person name="Matsunawa H."/>
            <person name="Ichihara T."/>
            <person name="Shiohata N."/>
            <person name="Sano S."/>
            <person name="Moriya S."/>
            <person name="Momiyama H."/>
            <person name="Satoh N."/>
            <person name="Takami S."/>
            <person name="Terashima Y."/>
            <person name="Suzuki O."/>
            <person name="Nakagawa S."/>
            <person name="Senoh A."/>
            <person name="Mizoguchi H."/>
            <person name="Goto Y."/>
            <person name="Shimizu F."/>
            <person name="Wakebe H."/>
            <person name="Hishigaki H."/>
            <person name="Watanabe T."/>
            <person name="Sugiyama A."/>
            <person name="Takemoto M."/>
            <person name="Kawakami B."/>
            <person name="Yamazaki M."/>
            <person name="Watanabe K."/>
            <person name="Kumagai A."/>
            <person name="Itakura S."/>
            <person name="Fukuzumi Y."/>
            <person name="Fujimori Y."/>
            <person name="Komiyama M."/>
            <person name="Tashiro H."/>
            <person name="Tanigami A."/>
            <person name="Fujiwara T."/>
            <person name="Ono T."/>
            <person name="Yamada K."/>
            <person name="Fujii Y."/>
            <person name="Ozaki K."/>
            <person name="Hirao M."/>
            <person name="Ohmori Y."/>
            <person name="Kawabata A."/>
            <person name="Hikiji T."/>
            <person name="Kobatake N."/>
            <person name="Inagaki H."/>
            <person name="Ikema Y."/>
            <person name="Okamoto S."/>
            <person name="Okitani R."/>
            <person name="Kawakami T."/>
            <person name="Noguchi S."/>
            <person name="Itoh T."/>
            <person name="Shigeta K."/>
            <person name="Senba T."/>
            <person name="Matsumura K."/>
            <person name="Nakajima Y."/>
            <person name="Mizuno T."/>
            <person name="Morinaga M."/>
            <person name="Sasaki M."/>
            <person name="Togashi T."/>
            <person name="Oyama M."/>
            <person name="Hata H."/>
            <person name="Watanabe M."/>
            <person name="Komatsu T."/>
            <person name="Mizushima-Sugano J."/>
            <person name="Satoh T."/>
            <person name="Shirai Y."/>
            <person name="Takahashi Y."/>
            <person name="Nakagawa K."/>
            <person name="Okumura K."/>
            <person name="Nagase T."/>
            <person name="Nomura N."/>
            <person name="Kikuchi H."/>
            <person name="Masuho Y."/>
            <person name="Yamashita R."/>
            <person name="Nakai K."/>
            <person name="Yada T."/>
            <person name="Nakamura Y."/>
            <person name="Ohara O."/>
            <person name="Isogai T."/>
            <person name="Sugano S."/>
        </authorList>
    </citation>
    <scope>NUCLEOTIDE SEQUENCE [LARGE SCALE MRNA]</scope>
    <source>
        <tissue>Spleen</tissue>
    </source>
</reference>
<reference key="2">
    <citation type="journal article" date="2006" name="Nature">
        <title>The DNA sequence and biological annotation of human chromosome 1.</title>
        <authorList>
            <person name="Gregory S.G."/>
            <person name="Barlow K.F."/>
            <person name="McLay K.E."/>
            <person name="Kaul R."/>
            <person name="Swarbreck D."/>
            <person name="Dunham A."/>
            <person name="Scott C.E."/>
            <person name="Howe K.L."/>
            <person name="Woodfine K."/>
            <person name="Spencer C.C.A."/>
            <person name="Jones M.C."/>
            <person name="Gillson C."/>
            <person name="Searle S."/>
            <person name="Zhou Y."/>
            <person name="Kokocinski F."/>
            <person name="McDonald L."/>
            <person name="Evans R."/>
            <person name="Phillips K."/>
            <person name="Atkinson A."/>
            <person name="Cooper R."/>
            <person name="Jones C."/>
            <person name="Hall R.E."/>
            <person name="Andrews T.D."/>
            <person name="Lloyd C."/>
            <person name="Ainscough R."/>
            <person name="Almeida J.P."/>
            <person name="Ambrose K.D."/>
            <person name="Anderson F."/>
            <person name="Andrew R.W."/>
            <person name="Ashwell R.I.S."/>
            <person name="Aubin K."/>
            <person name="Babbage A.K."/>
            <person name="Bagguley C.L."/>
            <person name="Bailey J."/>
            <person name="Beasley H."/>
            <person name="Bethel G."/>
            <person name="Bird C.P."/>
            <person name="Bray-Allen S."/>
            <person name="Brown J.Y."/>
            <person name="Brown A.J."/>
            <person name="Buckley D."/>
            <person name="Burton J."/>
            <person name="Bye J."/>
            <person name="Carder C."/>
            <person name="Chapman J.C."/>
            <person name="Clark S.Y."/>
            <person name="Clarke G."/>
            <person name="Clee C."/>
            <person name="Cobley V."/>
            <person name="Collier R.E."/>
            <person name="Corby N."/>
            <person name="Coville G.J."/>
            <person name="Davies J."/>
            <person name="Deadman R."/>
            <person name="Dunn M."/>
            <person name="Earthrowl M."/>
            <person name="Ellington A.G."/>
            <person name="Errington H."/>
            <person name="Frankish A."/>
            <person name="Frankland J."/>
            <person name="French L."/>
            <person name="Garner P."/>
            <person name="Garnett J."/>
            <person name="Gay L."/>
            <person name="Ghori M.R.J."/>
            <person name="Gibson R."/>
            <person name="Gilby L.M."/>
            <person name="Gillett W."/>
            <person name="Glithero R.J."/>
            <person name="Grafham D.V."/>
            <person name="Griffiths C."/>
            <person name="Griffiths-Jones S."/>
            <person name="Grocock R."/>
            <person name="Hammond S."/>
            <person name="Harrison E.S.I."/>
            <person name="Hart E."/>
            <person name="Haugen E."/>
            <person name="Heath P.D."/>
            <person name="Holmes S."/>
            <person name="Holt K."/>
            <person name="Howden P.J."/>
            <person name="Hunt A.R."/>
            <person name="Hunt S.E."/>
            <person name="Hunter G."/>
            <person name="Isherwood J."/>
            <person name="James R."/>
            <person name="Johnson C."/>
            <person name="Johnson D."/>
            <person name="Joy A."/>
            <person name="Kay M."/>
            <person name="Kershaw J.K."/>
            <person name="Kibukawa M."/>
            <person name="Kimberley A.M."/>
            <person name="King A."/>
            <person name="Knights A.J."/>
            <person name="Lad H."/>
            <person name="Laird G."/>
            <person name="Lawlor S."/>
            <person name="Leongamornlert D.A."/>
            <person name="Lloyd D.M."/>
            <person name="Loveland J."/>
            <person name="Lovell J."/>
            <person name="Lush M.J."/>
            <person name="Lyne R."/>
            <person name="Martin S."/>
            <person name="Mashreghi-Mohammadi M."/>
            <person name="Matthews L."/>
            <person name="Matthews N.S.W."/>
            <person name="McLaren S."/>
            <person name="Milne S."/>
            <person name="Mistry S."/>
            <person name="Moore M.J.F."/>
            <person name="Nickerson T."/>
            <person name="O'Dell C.N."/>
            <person name="Oliver K."/>
            <person name="Palmeiri A."/>
            <person name="Palmer S.A."/>
            <person name="Parker A."/>
            <person name="Patel D."/>
            <person name="Pearce A.V."/>
            <person name="Peck A.I."/>
            <person name="Pelan S."/>
            <person name="Phelps K."/>
            <person name="Phillimore B.J."/>
            <person name="Plumb R."/>
            <person name="Rajan J."/>
            <person name="Raymond C."/>
            <person name="Rouse G."/>
            <person name="Saenphimmachak C."/>
            <person name="Sehra H.K."/>
            <person name="Sheridan E."/>
            <person name="Shownkeen R."/>
            <person name="Sims S."/>
            <person name="Skuce C.D."/>
            <person name="Smith M."/>
            <person name="Steward C."/>
            <person name="Subramanian S."/>
            <person name="Sycamore N."/>
            <person name="Tracey A."/>
            <person name="Tromans A."/>
            <person name="Van Helmond Z."/>
            <person name="Wall M."/>
            <person name="Wallis J.M."/>
            <person name="White S."/>
            <person name="Whitehead S.L."/>
            <person name="Wilkinson J.E."/>
            <person name="Willey D.L."/>
            <person name="Williams H."/>
            <person name="Wilming L."/>
            <person name="Wray P.W."/>
            <person name="Wu Z."/>
            <person name="Coulson A."/>
            <person name="Vaudin M."/>
            <person name="Sulston J.E."/>
            <person name="Durbin R.M."/>
            <person name="Hubbard T."/>
            <person name="Wooster R."/>
            <person name="Dunham I."/>
            <person name="Carter N.P."/>
            <person name="McVean G."/>
            <person name="Ross M.T."/>
            <person name="Harrow J."/>
            <person name="Olson M.V."/>
            <person name="Beck S."/>
            <person name="Rogers J."/>
            <person name="Bentley D.R."/>
        </authorList>
    </citation>
    <scope>NUCLEOTIDE SEQUENCE [LARGE SCALE GENOMIC DNA]</scope>
</reference>
<reference key="3">
    <citation type="submission" date="2005-09" db="EMBL/GenBank/DDBJ databases">
        <authorList>
            <person name="Mural R.J."/>
            <person name="Istrail S."/>
            <person name="Sutton G.G."/>
            <person name="Florea L."/>
            <person name="Halpern A.L."/>
            <person name="Mobarry C.M."/>
            <person name="Lippert R."/>
            <person name="Walenz B."/>
            <person name="Shatkay H."/>
            <person name="Dew I."/>
            <person name="Miller J.R."/>
            <person name="Flanigan M.J."/>
            <person name="Edwards N.J."/>
            <person name="Bolanos R."/>
            <person name="Fasulo D."/>
            <person name="Halldorsson B.V."/>
            <person name="Hannenhalli S."/>
            <person name="Turner R."/>
            <person name="Yooseph S."/>
            <person name="Lu F."/>
            <person name="Nusskern D.R."/>
            <person name="Shue B.C."/>
            <person name="Zheng X.H."/>
            <person name="Zhong F."/>
            <person name="Delcher A.L."/>
            <person name="Huson D.H."/>
            <person name="Kravitz S.A."/>
            <person name="Mouchard L."/>
            <person name="Reinert K."/>
            <person name="Remington K.A."/>
            <person name="Clark A.G."/>
            <person name="Waterman M.S."/>
            <person name="Eichler E.E."/>
            <person name="Adams M.D."/>
            <person name="Hunkapiller M.W."/>
            <person name="Myers E.W."/>
            <person name="Venter J.C."/>
        </authorList>
    </citation>
    <scope>NUCLEOTIDE SEQUENCE [LARGE SCALE GENOMIC DNA]</scope>
</reference>
<reference key="4">
    <citation type="journal article" date="1991" name="J. Biol. Chem.">
        <title>The alpha 2(VIII) collagen gene. A novel member of the short chain collagen family located on the human chromosome 1.</title>
        <authorList>
            <person name="Muragaki Y."/>
            <person name="Jacenko O."/>
            <person name="Apte S."/>
            <person name="Mattei M.-G."/>
            <person name="Ninomiya Y."/>
            <person name="Olsen B.R."/>
        </authorList>
    </citation>
    <scope>NUCLEOTIDE SEQUENCE [GENOMIC DNA] OF 66-703</scope>
</reference>
<reference key="5">
    <citation type="journal article" date="1992" name="Biochim. Biophys. Acta">
        <title>Cleavage of type VIII collagen by human neutrophil elastase.</title>
        <authorList>
            <person name="Kittelberger R."/>
            <person name="Neale T.J."/>
            <person name="Francky K.T."/>
            <person name="Greenhill N.S."/>
            <person name="Gibson G.J."/>
        </authorList>
    </citation>
    <scope>PROTEOLYTIC PROCESSING</scope>
</reference>
<reference key="6">
    <citation type="journal article" date="2000" name="Matrix Biol.">
        <title>The alpha1(VIII) and alpha2(VIII) collagen chains form two distinct homotrimeric proteins in vivo.</title>
        <authorList>
            <person name="Greenhill N.S."/>
            <person name="Ruger B.M."/>
            <person name="Hasan Q."/>
            <person name="Davis P.F."/>
        </authorList>
    </citation>
    <scope>TISSUE SPECIFICITY</scope>
</reference>
<reference key="7">
    <citation type="journal article" date="2004" name="J. Biol. Chem.">
        <title>Expression and supramolecular assembly of recombinant alpha1(viii) and alpha2(viii) collagen homotrimers.</title>
        <authorList>
            <person name="Stephan S."/>
            <person name="Sherratt M.J."/>
            <person name="Hodson N."/>
            <person name="Shuttleworth C.A."/>
            <person name="Kielty C.M."/>
        </authorList>
    </citation>
    <scope>SUBUNIT</scope>
</reference>
<reference key="8">
    <citation type="journal article" date="2007" name="Eur. J. Clin. Invest.">
        <title>Collagen type VIII expression in human diabetic nephropathy.</title>
        <authorList>
            <person name="Gerth J."/>
            <person name="Cohen C.D."/>
            <person name="Hopfer U."/>
            <person name="Lindenmeyer M.T."/>
            <person name="Sommer M."/>
            <person name="Grone H.J."/>
            <person name="Wolf G."/>
        </authorList>
    </citation>
    <scope>TISSUE SPECIFICITY</scope>
    <scope>INDUCTION</scope>
</reference>
<reference key="9">
    <citation type="journal article" date="2001" name="Hum. Mol. Genet.">
        <title>Missense mutations in COL8A2, the gene encoding the alpha-2 chain of type VIII collagen, cause two forms of corneal endothelial dystrophy.</title>
        <authorList>
            <person name="Biswas S."/>
            <person name="Munier F.L."/>
            <person name="Yardley J."/>
            <person name="Hart-Holden N."/>
            <person name="Perveen R."/>
            <person name="Cousin P."/>
            <person name="Sutphin J.E."/>
            <person name="Noble B."/>
            <person name="Batterbury M."/>
            <person name="Kielty C."/>
            <person name="Hackett A."/>
            <person name="Bonshek R."/>
            <person name="Ridgway A."/>
            <person name="McLeod D."/>
            <person name="Sheffield V.C."/>
            <person name="Stone E.M."/>
            <person name="Schorderet D.F."/>
            <person name="Black G.C.M."/>
        </authorList>
    </citation>
    <scope>VARIANTS FECD1 GLN-304; ARG-357; HIS-434; LYS-455 AND LEU-575</scope>
    <scope>VARIANT PPCD2 LYS-455</scope>
    <scope>VARIANTS ARG-3; GLN-155 AND ILE-645</scope>
</reference>
<reference key="10">
    <citation type="journal article" date="2004" name="Jpn. J. Ophthalmol.">
        <title>Analysis of COL8A2 gene mutation in Japanese patients with Fuchs' endothelial dystrophy and posterior polymorphous dystrophy.</title>
        <authorList>
            <person name="Kobayashi A."/>
            <person name="Fujiki K."/>
            <person name="Murakami A."/>
            <person name="Kato T."/>
            <person name="Chen L.-Z."/>
            <person name="Onoe H."/>
            <person name="Nakayasu K."/>
            <person name="Sakurai M."/>
            <person name="Takahashi M."/>
            <person name="Sugiyama K."/>
            <person name="Kanai A."/>
        </authorList>
    </citation>
    <scope>VARIANTS GLN-155 AND MET-502</scope>
</reference>
<dbReference type="EMBL" id="AK074129">
    <property type="protein sequence ID" value="BAB84955.1"/>
    <property type="status" value="ALT_INIT"/>
    <property type="molecule type" value="mRNA"/>
</dbReference>
<dbReference type="EMBL" id="AL138787">
    <property type="status" value="NOT_ANNOTATED_CDS"/>
    <property type="molecule type" value="Genomic_DNA"/>
</dbReference>
<dbReference type="EMBL" id="CH471059">
    <property type="protein sequence ID" value="EAX07388.1"/>
    <property type="molecule type" value="Genomic_DNA"/>
</dbReference>
<dbReference type="EMBL" id="M60832">
    <property type="protein sequence ID" value="AAA62822.1"/>
    <property type="molecule type" value="Genomic_DNA"/>
</dbReference>
<dbReference type="CCDS" id="CCDS403.1"/>
<dbReference type="PIR" id="A57131">
    <property type="entry name" value="A57131"/>
</dbReference>
<dbReference type="RefSeq" id="NP_001281276.1">
    <property type="nucleotide sequence ID" value="NM_001294347.1"/>
</dbReference>
<dbReference type="RefSeq" id="NP_005193.1">
    <property type="nucleotide sequence ID" value="NM_005202.4"/>
</dbReference>
<dbReference type="SMR" id="P25067"/>
<dbReference type="BioGRID" id="107693">
    <property type="interactions" value="47"/>
</dbReference>
<dbReference type="ComplexPortal" id="CPX-1745">
    <property type="entry name" value="Collagen type VIII trimer variant 1"/>
</dbReference>
<dbReference type="ComplexPortal" id="CPX-1747">
    <property type="entry name" value="Collagen type VIII trimer variant 3"/>
</dbReference>
<dbReference type="FunCoup" id="P25067">
    <property type="interactions" value="225"/>
</dbReference>
<dbReference type="IntAct" id="P25067">
    <property type="interactions" value="20"/>
</dbReference>
<dbReference type="STRING" id="9606.ENSP00000380901"/>
<dbReference type="GlyGen" id="P25067">
    <property type="glycosylation" value="4 sites, 1 O-linked glycan (3 sites)"/>
</dbReference>
<dbReference type="iPTMnet" id="P25067"/>
<dbReference type="PhosphoSitePlus" id="P25067"/>
<dbReference type="BioMuta" id="COL8A2"/>
<dbReference type="DMDM" id="45644957"/>
<dbReference type="jPOST" id="P25067"/>
<dbReference type="MassIVE" id="P25067"/>
<dbReference type="PaxDb" id="9606-ENSP00000380901"/>
<dbReference type="PeptideAtlas" id="P25067"/>
<dbReference type="ProteomicsDB" id="54250"/>
<dbReference type="Antibodypedia" id="56213">
    <property type="antibodies" value="162 antibodies from 24 providers"/>
</dbReference>
<dbReference type="DNASU" id="1296"/>
<dbReference type="Ensembl" id="ENST00000303143.9">
    <property type="protein sequence ID" value="ENSP00000305913.4"/>
    <property type="gene ID" value="ENSG00000171812.13"/>
</dbReference>
<dbReference type="Ensembl" id="ENST00000397799.2">
    <property type="protein sequence ID" value="ENSP00000380901.1"/>
    <property type="gene ID" value="ENSG00000171812.13"/>
</dbReference>
<dbReference type="GeneID" id="1296"/>
<dbReference type="KEGG" id="hsa:1296"/>
<dbReference type="MANE-Select" id="ENST00000397799.2">
    <property type="protein sequence ID" value="ENSP00000380901.1"/>
    <property type="RefSeq nucleotide sequence ID" value="NM_005202.4"/>
    <property type="RefSeq protein sequence ID" value="NP_005193.1"/>
</dbReference>
<dbReference type="UCSC" id="uc001bzv.4">
    <property type="organism name" value="human"/>
</dbReference>
<dbReference type="AGR" id="HGNC:2216"/>
<dbReference type="CTD" id="1296"/>
<dbReference type="DisGeNET" id="1296"/>
<dbReference type="GeneCards" id="COL8A2"/>
<dbReference type="HGNC" id="HGNC:2216">
    <property type="gene designation" value="COL8A2"/>
</dbReference>
<dbReference type="HPA" id="ENSG00000171812">
    <property type="expression patterns" value="Low tissue specificity"/>
</dbReference>
<dbReference type="MalaCards" id="COL8A2"/>
<dbReference type="MIM" id="120252">
    <property type="type" value="gene"/>
</dbReference>
<dbReference type="MIM" id="136800">
    <property type="type" value="phenotype"/>
</dbReference>
<dbReference type="MIM" id="609140">
    <property type="type" value="phenotype"/>
</dbReference>
<dbReference type="neXtProt" id="NX_P25067"/>
<dbReference type="OpenTargets" id="ENSG00000171812"/>
<dbReference type="Orphanet" id="98974">
    <property type="disease" value="Fuchs endothelial corneal dystrophy"/>
</dbReference>
<dbReference type="Orphanet" id="98973">
    <property type="disease" value="Posterior polymorphous corneal dystrophy"/>
</dbReference>
<dbReference type="PharmGKB" id="PA26732"/>
<dbReference type="VEuPathDB" id="HostDB:ENSG00000171812"/>
<dbReference type="eggNOG" id="ENOG502QRST">
    <property type="taxonomic scope" value="Eukaryota"/>
</dbReference>
<dbReference type="GeneTree" id="ENSGT00940000154317"/>
<dbReference type="InParanoid" id="P25067"/>
<dbReference type="OMA" id="KHGMPGQ"/>
<dbReference type="OrthoDB" id="6139560at2759"/>
<dbReference type="PAN-GO" id="P25067">
    <property type="GO annotations" value="4 GO annotations based on evolutionary models"/>
</dbReference>
<dbReference type="PhylomeDB" id="P25067"/>
<dbReference type="TreeFam" id="TF334029"/>
<dbReference type="PathwayCommons" id="P25067"/>
<dbReference type="Reactome" id="R-HSA-1442490">
    <property type="pathway name" value="Collagen degradation"/>
</dbReference>
<dbReference type="Reactome" id="R-HSA-1650814">
    <property type="pathway name" value="Collagen biosynthesis and modifying enzymes"/>
</dbReference>
<dbReference type="Reactome" id="R-HSA-2022090">
    <property type="pathway name" value="Assembly of collagen fibrils and other multimeric structures"/>
</dbReference>
<dbReference type="Reactome" id="R-HSA-216083">
    <property type="pathway name" value="Integrin cell surface interactions"/>
</dbReference>
<dbReference type="Reactome" id="R-HSA-8948216">
    <property type="pathway name" value="Collagen chain trimerization"/>
</dbReference>
<dbReference type="BioGRID-ORCS" id="1296">
    <property type="hits" value="19 hits in 1141 CRISPR screens"/>
</dbReference>
<dbReference type="ChiTaRS" id="COL8A2">
    <property type="organism name" value="human"/>
</dbReference>
<dbReference type="GeneWiki" id="COL8A2"/>
<dbReference type="GenomeRNAi" id="1296"/>
<dbReference type="Pharos" id="P25067">
    <property type="development level" value="Tbio"/>
</dbReference>
<dbReference type="PRO" id="PR:P25067"/>
<dbReference type="Proteomes" id="UP000005640">
    <property type="component" value="Chromosome 1"/>
</dbReference>
<dbReference type="RNAct" id="P25067">
    <property type="molecule type" value="protein"/>
</dbReference>
<dbReference type="Bgee" id="ENSG00000171812">
    <property type="expression patterns" value="Expressed in periodontal ligament and 163 other cell types or tissues"/>
</dbReference>
<dbReference type="ExpressionAtlas" id="P25067">
    <property type="expression patterns" value="baseline and differential"/>
</dbReference>
<dbReference type="GO" id="GO:0005604">
    <property type="term" value="C:basement membrane"/>
    <property type="evidence" value="ECO:0000303"/>
    <property type="project" value="UniProtKB"/>
</dbReference>
<dbReference type="GO" id="GO:0005591">
    <property type="term" value="C:collagen type VIII trimer"/>
    <property type="evidence" value="ECO:0000304"/>
    <property type="project" value="GO_Central"/>
</dbReference>
<dbReference type="GO" id="GO:0062023">
    <property type="term" value="C:collagen-containing extracellular matrix"/>
    <property type="evidence" value="ECO:0007005"/>
    <property type="project" value="BHF-UCL"/>
</dbReference>
<dbReference type="GO" id="GO:0005788">
    <property type="term" value="C:endoplasmic reticulum lumen"/>
    <property type="evidence" value="ECO:0000304"/>
    <property type="project" value="Reactome"/>
</dbReference>
<dbReference type="GO" id="GO:0031012">
    <property type="term" value="C:extracellular matrix"/>
    <property type="evidence" value="ECO:0000303"/>
    <property type="project" value="UniProtKB"/>
</dbReference>
<dbReference type="GO" id="GO:0005576">
    <property type="term" value="C:extracellular region"/>
    <property type="evidence" value="ECO:0000304"/>
    <property type="project" value="Reactome"/>
</dbReference>
<dbReference type="GO" id="GO:0005615">
    <property type="term" value="C:extracellular space"/>
    <property type="evidence" value="ECO:0000318"/>
    <property type="project" value="GO_Central"/>
</dbReference>
<dbReference type="GO" id="GO:0005201">
    <property type="term" value="F:extracellular matrix structural constituent"/>
    <property type="evidence" value="ECO:0000303"/>
    <property type="project" value="UniProtKB"/>
</dbReference>
<dbReference type="GO" id="GO:0030020">
    <property type="term" value="F:extracellular matrix structural constituent conferring tensile strength"/>
    <property type="evidence" value="ECO:0000318"/>
    <property type="project" value="GO_Central"/>
</dbReference>
<dbReference type="GO" id="GO:0030674">
    <property type="term" value="F:protein-macromolecule adaptor activity"/>
    <property type="evidence" value="ECO:0000303"/>
    <property type="project" value="UniProtKB"/>
</dbReference>
<dbReference type="GO" id="GO:0001525">
    <property type="term" value="P:angiogenesis"/>
    <property type="evidence" value="ECO:0007669"/>
    <property type="project" value="UniProtKB-KW"/>
</dbReference>
<dbReference type="GO" id="GO:0048593">
    <property type="term" value="P:camera-type eye morphogenesis"/>
    <property type="evidence" value="ECO:0007669"/>
    <property type="project" value="Ensembl"/>
</dbReference>
<dbReference type="GO" id="GO:0098609">
    <property type="term" value="P:cell-cell adhesion"/>
    <property type="evidence" value="ECO:0000303"/>
    <property type="project" value="UniProtKB"/>
</dbReference>
<dbReference type="GO" id="GO:0001935">
    <property type="term" value="P:endothelial cell proliferation"/>
    <property type="evidence" value="ECO:0007669"/>
    <property type="project" value="Ensembl"/>
</dbReference>
<dbReference type="GO" id="GO:0030198">
    <property type="term" value="P:extracellular matrix organization"/>
    <property type="evidence" value="ECO:0000303"/>
    <property type="project" value="UniProtKB"/>
</dbReference>
<dbReference type="FunFam" id="2.60.120.40:FF:000001">
    <property type="entry name" value="Complement C1q B chain"/>
    <property type="match status" value="1"/>
</dbReference>
<dbReference type="Gene3D" id="2.60.120.40">
    <property type="match status" value="1"/>
</dbReference>
<dbReference type="InterPro" id="IPR001073">
    <property type="entry name" value="C1q_dom"/>
</dbReference>
<dbReference type="InterPro" id="IPR008160">
    <property type="entry name" value="Collagen"/>
</dbReference>
<dbReference type="InterPro" id="IPR050392">
    <property type="entry name" value="Collagen/C1q_domain"/>
</dbReference>
<dbReference type="InterPro" id="IPR008983">
    <property type="entry name" value="Tumour_necrosis_fac-like_dom"/>
</dbReference>
<dbReference type="PANTHER" id="PTHR15427:SF33">
    <property type="entry name" value="COLLAGEN IV NC1 DOMAIN-CONTAINING PROTEIN"/>
    <property type="match status" value="1"/>
</dbReference>
<dbReference type="PANTHER" id="PTHR15427">
    <property type="entry name" value="EMILIN ELASTIN MICROFIBRIL INTERFACE-LOCATED PROTEIN ELASTIN MICROFIBRIL INTERFACER"/>
    <property type="match status" value="1"/>
</dbReference>
<dbReference type="Pfam" id="PF00386">
    <property type="entry name" value="C1q"/>
    <property type="match status" value="1"/>
</dbReference>
<dbReference type="Pfam" id="PF01391">
    <property type="entry name" value="Collagen"/>
    <property type="match status" value="3"/>
</dbReference>
<dbReference type="PRINTS" id="PR00007">
    <property type="entry name" value="COMPLEMNTC1Q"/>
</dbReference>
<dbReference type="SMART" id="SM00110">
    <property type="entry name" value="C1Q"/>
    <property type="match status" value="1"/>
</dbReference>
<dbReference type="SUPFAM" id="SSF49842">
    <property type="entry name" value="TNF-like"/>
    <property type="match status" value="1"/>
</dbReference>
<dbReference type="PROSITE" id="PS50871">
    <property type="entry name" value="C1Q"/>
    <property type="match status" value="1"/>
</dbReference>
<feature type="signal peptide" evidence="2">
    <location>
        <begin position="1"/>
        <end position="28"/>
    </location>
</feature>
<feature type="chain" id="PRO_0000005835" description="Collagen alpha-2(VIII) chain">
    <location>
        <begin position="29"/>
        <end position="703"/>
    </location>
</feature>
<feature type="domain" description="C1q" evidence="3">
    <location>
        <begin position="570"/>
        <end position="703"/>
    </location>
</feature>
<feature type="region of interest" description="Nonhelical region (NC2)">
    <location>
        <begin position="29"/>
        <end position="76"/>
    </location>
</feature>
<feature type="region of interest" description="Disordered" evidence="4">
    <location>
        <begin position="70"/>
        <end position="544"/>
    </location>
</feature>
<feature type="region of interest" description="Triple-helical region">
    <location>
        <begin position="77"/>
        <end position="536"/>
    </location>
</feature>
<feature type="region of interest" description="Nonhelical region (NC1)">
    <location>
        <begin position="537"/>
        <end position="703"/>
    </location>
</feature>
<feature type="compositionally biased region" description="Pro residues" evidence="4">
    <location>
        <begin position="79"/>
        <end position="97"/>
    </location>
</feature>
<feature type="compositionally biased region" description="Low complexity" evidence="4">
    <location>
        <begin position="166"/>
        <end position="192"/>
    </location>
</feature>
<feature type="compositionally biased region" description="Gly residues" evidence="4">
    <location>
        <begin position="206"/>
        <end position="224"/>
    </location>
</feature>
<feature type="compositionally biased region" description="Low complexity" evidence="4">
    <location>
        <begin position="265"/>
        <end position="275"/>
    </location>
</feature>
<feature type="compositionally biased region" description="Low complexity" evidence="4">
    <location>
        <begin position="285"/>
        <end position="297"/>
    </location>
</feature>
<feature type="compositionally biased region" description="Gly residues" evidence="4">
    <location>
        <begin position="433"/>
        <end position="442"/>
    </location>
</feature>
<feature type="compositionally biased region" description="Low complexity" evidence="4">
    <location>
        <begin position="444"/>
        <end position="462"/>
    </location>
</feature>
<feature type="compositionally biased region" description="Low complexity" evidence="4">
    <location>
        <begin position="476"/>
        <end position="486"/>
    </location>
</feature>
<feature type="compositionally biased region" description="Pro residues" evidence="4">
    <location>
        <begin position="506"/>
        <end position="532"/>
    </location>
</feature>
<feature type="sequence variant" id="VAR_017893" description="In dbSNP:rs115156902." evidence="6">
    <original>G</original>
    <variation>R</variation>
    <location>
        <position position="3"/>
    </location>
</feature>
<feature type="sequence variant" id="VAR_017894" description="In dbSNP:rs75864656." evidence="6 9">
    <original>R</original>
    <variation>Q</variation>
    <location>
        <position position="155"/>
    </location>
</feature>
<feature type="sequence variant" id="VAR_017895" description="In FECD1; dbSNP:rs369487110." evidence="6">
    <original>R</original>
    <variation>Q</variation>
    <location>
        <position position="304"/>
    </location>
</feature>
<feature type="sequence variant" id="VAR_017896" description="In FECD1; uncertain significance; dbSNP:rs199786966." evidence="6">
    <original>G</original>
    <variation>R</variation>
    <location>
        <position position="357"/>
    </location>
</feature>
<feature type="sequence variant" id="VAR_017897" description="In FECD1; dbSNP:rs201235688." evidence="6">
    <original>R</original>
    <variation>H</variation>
    <location>
        <position position="434"/>
    </location>
</feature>
<feature type="sequence variant" id="VAR_017898" description="In FECD1 and PPCD2; dbSNP:rs80358191." evidence="6">
    <original>Q</original>
    <variation>K</variation>
    <location>
        <position position="455"/>
    </location>
</feature>
<feature type="sequence variant" id="VAR_021387" description="In dbSNP:rs117860804." evidence="9">
    <original>T</original>
    <variation>M</variation>
    <location>
        <position position="502"/>
    </location>
</feature>
<feature type="sequence variant" id="VAR_017899" description="In FECD1; uncertain significance; dbSNP:rs145553904." evidence="6">
    <original>P</original>
    <variation>L</variation>
    <location>
        <position position="575"/>
    </location>
</feature>
<feature type="sequence variant" id="VAR_017900" description="In dbSNP:rs200767854." evidence="6">
    <original>T</original>
    <variation>I</variation>
    <location>
        <position position="645"/>
    </location>
</feature>
<feature type="sequence conflict" description="In Ref. 4; AAA62822." evidence="11" ref="4">
    <original>R</original>
    <variation>W</variation>
    <location>
        <position position="88"/>
    </location>
</feature>
<feature type="sequence conflict" description="In Ref. 4; AAA62822." evidence="11" ref="4">
    <original>M</original>
    <variation>H</variation>
    <location>
        <position position="102"/>
    </location>
</feature>
<feature type="sequence conflict" description="In Ref. 4; AAA62822." evidence="11" ref="4">
    <original>K</original>
    <variation>N</variation>
    <location>
        <position position="133"/>
    </location>
</feature>
<feature type="sequence conflict" description="In Ref. 4; AAA62822." evidence="11" ref="4">
    <original>E</original>
    <variation>D</variation>
    <location>
        <position position="347"/>
    </location>
</feature>
<feature type="sequence conflict" description="In Ref. 4; AAA62822." evidence="11" ref="4">
    <original>PK</original>
    <variation>LR</variation>
    <location>
        <begin position="377"/>
        <end position="378"/>
    </location>
</feature>
<feature type="sequence conflict" description="In Ref. 4; AAA62822." evidence="11" ref="4">
    <original>T</original>
    <variation>R</variation>
    <location>
        <position position="506"/>
    </location>
</feature>
<feature type="sequence conflict" description="In Ref. 4; AAA62822." evidence="11" ref="4">
    <original>P</original>
    <variation>L</variation>
    <location>
        <position position="523"/>
    </location>
</feature>
<feature type="sequence conflict" description="In Ref. 4; AAA62822." evidence="11" ref="4">
    <location>
        <begin position="529"/>
        <end position="531"/>
    </location>
</feature>
<feature type="sequence conflict" description="In Ref. 4; AAA62822." evidence="11" ref="4">
    <original>F</original>
    <variation>L</variation>
    <location>
        <position position="585"/>
    </location>
</feature>
<feature type="sequence conflict" description="In Ref. 4; AAA62822." evidence="11" ref="4">
    <original>M</original>
    <variation>I</variation>
    <location>
        <position position="677"/>
    </location>
</feature>
<proteinExistence type="evidence at protein level"/>
<evidence type="ECO:0000250" key="1"/>
<evidence type="ECO:0000255" key="2"/>
<evidence type="ECO:0000255" key="3">
    <source>
        <dbReference type="PROSITE-ProRule" id="PRU00368"/>
    </source>
</evidence>
<evidence type="ECO:0000256" key="4">
    <source>
        <dbReference type="SAM" id="MobiDB-lite"/>
    </source>
</evidence>
<evidence type="ECO:0000269" key="5">
    <source>
    </source>
</evidence>
<evidence type="ECO:0000269" key="6">
    <source>
    </source>
</evidence>
<evidence type="ECO:0000269" key="7">
    <source>
    </source>
</evidence>
<evidence type="ECO:0000269" key="8">
    <source>
    </source>
</evidence>
<evidence type="ECO:0000269" key="9">
    <source>
    </source>
</evidence>
<evidence type="ECO:0000269" key="10">
    <source>
    </source>
</evidence>
<evidence type="ECO:0000305" key="11"/>
<keyword id="KW-0037">Angiogenesis</keyword>
<keyword id="KW-0084">Basement membrane</keyword>
<keyword id="KW-0130">Cell adhesion</keyword>
<keyword id="KW-0176">Collagen</keyword>
<keyword id="KW-1212">Corneal dystrophy</keyword>
<keyword id="KW-0225">Disease variant</keyword>
<keyword id="KW-0272">Extracellular matrix</keyword>
<keyword id="KW-0379">Hydroxylation</keyword>
<keyword id="KW-1267">Proteomics identification</keyword>
<keyword id="KW-1185">Reference proteome</keyword>
<keyword id="KW-0677">Repeat</keyword>
<keyword id="KW-0964">Secreted</keyword>
<keyword id="KW-0732">Signal</keyword>
<gene>
    <name type="primary">COL8A2</name>
</gene>
<accession>P25067</accession>
<accession>Q5JV31</accession>
<accession>Q8TEJ5</accession>
<name>CO8A2_HUMAN</name>
<comment type="function">
    <text evidence="1">Macromolecular component of the subendothelium. Major component of the Descemet's membrane (basement membrane) of corneal endothelial cells. Also a component of the endothelia of blood vessels. Necessary for migration and proliferation of vascular smooth muscle cells and thus, has a potential role in the maintenance of vessel wall integrity and structure, in particular in atherogenesis (By similarity).</text>
</comment>
<comment type="subunit">
    <text evidence="7">Homotrimers, or heterotrimers in association with alpha 2(VIII) type collagens. Four homotrimers can form a tetrahedron stabilized by central interacting C-terminal NC1 trimers.</text>
</comment>
<comment type="subcellular location">
    <subcellularLocation>
        <location>Secreted</location>
        <location>Extracellular space</location>
        <location>Extracellular matrix</location>
        <location>Basement membrane</location>
    </subcellularLocation>
</comment>
<comment type="tissue specificity">
    <text evidence="5 10">Expressed primarily in the subendothelium of large blood vessels. Also expressed in arterioles and venules in muscle, heart, kidney, spleen, umbilical cord, liver and lung and is also found in connective tissue layers around hair follicles, around nerve bundles in muscle, in the dura of the optic nerve, in cornea and sclera, and in the perichondrium of cartilaginous tissues. In the kidney, expressed in mesangial cells, glomerular endothelial cells, and tubular epithelial cells. Also expressed in mast cells, and in astrocytes during the repair process. Expressed in Descemet's membrane.</text>
</comment>
<comment type="induction">
    <text evidence="10">Some up-regulation in diabetic nephropathy.</text>
</comment>
<comment type="PTM">
    <text evidence="8">Proteolytically cleaved by neutrophil elastase, in vitro.</text>
</comment>
<comment type="PTM">
    <text>Prolines at the third position of the tripeptide repeating unit (G-X-Y) are hydroxylated in some or all of the chains.</text>
</comment>
<comment type="disease" evidence="6">
    <disease id="DI-01636">
        <name>Corneal dystrophy, Fuchs endothelial, 1</name>
        <acronym>FECD1</acronym>
        <description>A corneal disease caused by loss of endothelium of the central cornea. It is characterized by focal wart-like guttata that arise from Descemet membrane and develop in the central cornea, epithelial blisters, reduced vision and pain. Descemet membrane is thickened by abnormal collagenous deposition.</description>
        <dbReference type="MIM" id="136800"/>
    </disease>
    <text>The disease is caused by variants affecting the gene represented in this entry.</text>
</comment>
<comment type="disease" evidence="6">
    <disease id="DI-02185">
        <name>Corneal dystrophy, posterior polymorphous, 2</name>
        <acronym>PPCD2</acronym>
        <description>A rare mild subtype of posterior corneal dystrophy characterized by alterations of Descemet membrane presenting as vesicles, opacities or band-like lesions on slit-lamp examination and specular microscopy. Affected patient typically are asymptomatic.</description>
        <dbReference type="MIM" id="609140"/>
    </disease>
    <text>The disease is caused by variants affecting the gene represented in this entry.</text>
</comment>
<comment type="sequence caution" evidence="11">
    <conflict type="erroneous initiation">
        <sequence resource="EMBL-CDS" id="BAB84955"/>
    </conflict>
</comment>
<protein>
    <recommendedName>
        <fullName>Collagen alpha-2(VIII) chain</fullName>
    </recommendedName>
    <alternativeName>
        <fullName>Endothelial collagen</fullName>
    </alternativeName>
</protein>
<sequence length="703" mass="67244">MLGTLTPLSSLLLLLLVLVLGCGPRASSGGGAGGAAGYAPVKYIQPMQKGPVGPPFREGKGQYLEMPLPLLPMDLKGEPGPPGKPGPRGPPGPPGFPGKPGMGKPGLHGQPGPAGPPGFSRMGKAGPPGLPGKVGPPGQPGLRGEPGIRGDQGLRGPPGPPGLPGPSGITIPGKPGAQGVPGPPGFQGEPGPQGEPGPPGDRGLKGDNGVGQPGLPGAPGQGGAPGPPGLPGPAGLGKPGLDGLPGAPGDKGESGPPGVPGPRGEPGAVGPKGPPGVDGVGVPGAAGLPGPQGPSGAKGEPGTRGPPGLIGPTGYGMPGLPGPKGDRGPAGVPGLLGDRGEPGEDGEPGEQGPQGLGGPPGLPGSAGLPGRRGPPGPKGEAGPGGPPGVPGIRGDQGPSGLAGKPGVPGERGLPGAHGPPGPTGPKGEPGFTGRPGGPGVAGALGQKGDLGLPGQPGLRGPSGIPGLQGPAGPIGPQGLPGLKGEPGLPGPPGEGRAGEPGTAGPTGPPGVPGSPGITGPPGPPGPPGPPGAPGAFDETGIAGLHLPNGGVEGAVLGKGGKPQFGLGELSAHATPAFTAVLTSPFPASGMPVKFDRTLYNGHSGYNPATGIFTCPVGGVYYFAYHVHVKGTNVWVALYKNNVPATYTYDEYKKGYLDQASGGAVLQLRPNDQVWVQMPSDQANGLYSTEYIHSSFSGFLLCPT</sequence>